<evidence type="ECO:0000255" key="1"/>
<evidence type="ECO:0000256" key="2">
    <source>
        <dbReference type="SAM" id="MobiDB-lite"/>
    </source>
</evidence>
<evidence type="ECO:0000269" key="3">
    <source>
    </source>
</evidence>
<evidence type="ECO:0000269" key="4">
    <source>
    </source>
</evidence>
<evidence type="ECO:0000269" key="5">
    <source>
    </source>
</evidence>
<evidence type="ECO:0000269" key="6">
    <source>
    </source>
</evidence>
<evidence type="ECO:0000303" key="7">
    <source>
    </source>
</evidence>
<evidence type="ECO:0000303" key="8">
    <source>
    </source>
</evidence>
<evidence type="ECO:0000305" key="9"/>
<evidence type="ECO:0000312" key="10">
    <source>
        <dbReference type="WormBase" id="ZK328.4"/>
    </source>
</evidence>
<keyword id="KW-0158">Chromosome</keyword>
<keyword id="KW-1185">Reference proteome</keyword>
<dbReference type="EMBL" id="BX284603">
    <property type="protein sequence ID" value="CCD70950.1"/>
    <property type="molecule type" value="Genomic_DNA"/>
</dbReference>
<dbReference type="PIR" id="T29006">
    <property type="entry name" value="T29006"/>
</dbReference>
<dbReference type="RefSeq" id="NP_498307.1">
    <property type="nucleotide sequence ID" value="NM_065906.5"/>
</dbReference>
<dbReference type="SMR" id="Q23462"/>
<dbReference type="FunCoup" id="Q23462">
    <property type="interactions" value="172"/>
</dbReference>
<dbReference type="STRING" id="6239.ZK328.4.1"/>
<dbReference type="PaxDb" id="6239-ZK328.4"/>
<dbReference type="EnsemblMetazoa" id="ZK328.4.1">
    <property type="protein sequence ID" value="ZK328.4.1"/>
    <property type="gene ID" value="WBGene00022694"/>
</dbReference>
<dbReference type="GeneID" id="175850"/>
<dbReference type="KEGG" id="cel:CELE_ZK328.4"/>
<dbReference type="UCSC" id="ZK328.4">
    <property type="organism name" value="c. elegans"/>
</dbReference>
<dbReference type="AGR" id="WB:WBGene00022694"/>
<dbReference type="CTD" id="175850"/>
<dbReference type="WormBase" id="ZK328.4">
    <property type="protein sequence ID" value="CE28182"/>
    <property type="gene ID" value="WBGene00022694"/>
    <property type="gene designation" value="gcna-1"/>
</dbReference>
<dbReference type="eggNOG" id="KOG3854">
    <property type="taxonomic scope" value="Eukaryota"/>
</dbReference>
<dbReference type="GeneTree" id="ENSGT00440000040163"/>
<dbReference type="HOGENOM" id="CLU_512136_0_0_1"/>
<dbReference type="InParanoid" id="Q23462"/>
<dbReference type="OMA" id="PFIERCH"/>
<dbReference type="OrthoDB" id="20772at2759"/>
<dbReference type="PRO" id="PR:Q23462"/>
<dbReference type="Proteomes" id="UP000001940">
    <property type="component" value="Chromosome III"/>
</dbReference>
<dbReference type="Bgee" id="WBGene00022694">
    <property type="expression patterns" value="Expressed in germ line (C elegans) and 4 other cell types or tissues"/>
</dbReference>
<dbReference type="GO" id="GO:0000793">
    <property type="term" value="C:condensed chromosome"/>
    <property type="evidence" value="ECO:0000314"/>
    <property type="project" value="UniProtKB"/>
</dbReference>
<dbReference type="GO" id="GO:0005634">
    <property type="term" value="C:nucleus"/>
    <property type="evidence" value="ECO:0000318"/>
    <property type="project" value="GO_Central"/>
</dbReference>
<dbReference type="GO" id="GO:0016605">
    <property type="term" value="C:PML body"/>
    <property type="evidence" value="ECO:0000314"/>
    <property type="project" value="UniProtKB"/>
</dbReference>
<dbReference type="GO" id="GO:0032184">
    <property type="term" value="F:SUMO polymer binding"/>
    <property type="evidence" value="ECO:0000314"/>
    <property type="project" value="UniProtKB"/>
</dbReference>
<dbReference type="GO" id="GO:0045132">
    <property type="term" value="P:meiotic chromosome segregation"/>
    <property type="evidence" value="ECO:0000315"/>
    <property type="project" value="WormBase"/>
</dbReference>
<dbReference type="GO" id="GO:0106300">
    <property type="term" value="P:protein-DNA covalent cross-linking repair"/>
    <property type="evidence" value="ECO:0000315"/>
    <property type="project" value="UniProtKB"/>
</dbReference>
<dbReference type="InterPro" id="IPR006640">
    <property type="entry name" value="SprT-like_domain"/>
</dbReference>
<dbReference type="PANTHER" id="PTHR23099:SF0">
    <property type="entry name" value="GERM CELL NUCLEAR ACIDIC PROTEIN"/>
    <property type="match status" value="1"/>
</dbReference>
<dbReference type="PANTHER" id="PTHR23099">
    <property type="entry name" value="TRANSCRIPTIONAL REGULATOR"/>
    <property type="match status" value="1"/>
</dbReference>
<dbReference type="Pfam" id="PF10263">
    <property type="entry name" value="SprT-like"/>
    <property type="match status" value="1"/>
</dbReference>
<dbReference type="SMART" id="SM00731">
    <property type="entry name" value="SprT"/>
    <property type="match status" value="1"/>
</dbReference>
<feature type="chain" id="PRO_0000454374" description="Germ cell nuclear acidic-1 protein">
    <location>
        <begin position="1"/>
        <end position="532"/>
    </location>
</feature>
<feature type="domain" description="SprT-like" evidence="1">
    <location>
        <begin position="308"/>
        <end position="398"/>
    </location>
</feature>
<feature type="region of interest" description="Disordered" evidence="2">
    <location>
        <begin position="1"/>
        <end position="50"/>
    </location>
</feature>
<feature type="region of interest" description="Disordered" evidence="2">
    <location>
        <begin position="84"/>
        <end position="181"/>
    </location>
</feature>
<feature type="region of interest" description="Disordered" evidence="2">
    <location>
        <begin position="213"/>
        <end position="253"/>
    </location>
</feature>
<feature type="region of interest" description="Disordered" evidence="2">
    <location>
        <begin position="468"/>
        <end position="489"/>
    </location>
</feature>
<feature type="compositionally biased region" description="Basic and acidic residues" evidence="2">
    <location>
        <begin position="1"/>
        <end position="10"/>
    </location>
</feature>
<feature type="compositionally biased region" description="Low complexity" evidence="2">
    <location>
        <begin position="14"/>
        <end position="32"/>
    </location>
</feature>
<feature type="compositionally biased region" description="Basic and acidic residues" evidence="2">
    <location>
        <begin position="39"/>
        <end position="48"/>
    </location>
</feature>
<feature type="compositionally biased region" description="Basic and acidic residues" evidence="2">
    <location>
        <begin position="94"/>
        <end position="107"/>
    </location>
</feature>
<feature type="compositionally biased region" description="Basic and acidic residues" evidence="2">
    <location>
        <begin position="124"/>
        <end position="133"/>
    </location>
</feature>
<feature type="compositionally biased region" description="Acidic residues" evidence="2">
    <location>
        <begin position="213"/>
        <end position="235"/>
    </location>
</feature>
<feature type="compositionally biased region" description="Basic and acidic residues" evidence="2">
    <location>
        <begin position="236"/>
        <end position="251"/>
    </location>
</feature>
<accession>Q23462</accession>
<name>GCNA1_CAEEL</name>
<proteinExistence type="evidence at protein level"/>
<gene>
    <name evidence="7 10" type="primary">gcna-1</name>
    <name evidence="10" type="ORF">ZK328.4</name>
</gene>
<comment type="function">
    <text evidence="4 5 6">May play a role in DNA-protein cross-links (DPCs) clearance through a SUMO-dependent recruitment to sites of DPCs, ensuring the genomic stability by protecting germ cells and early embryos from various sources of damage (PubMed:30914427, PubMed:31839537, PubMed:31839538). May resolve the topoisomerase II (top-2) DPCs (PubMed:31839537, PubMed:31839538). Limits replication stress and DNA double-strand breaks (PubMed:31839537).</text>
</comment>
<comment type="subunit">
    <text evidence="6">Interacts with top-2; this interaction allows the resolution of topoisomerase II (top-2) DNA-protein cross-links.</text>
</comment>
<comment type="subcellular location">
    <subcellularLocation>
        <location evidence="6">Chromosome</location>
    </subcellularLocation>
    <text evidence="6">Localizes on condensed chromosomes in spermatocytes in G2 and M during meiotic prophase (PubMed:31839538). Colocalizes with top-2 on condensed chromosomes during embryonic cell divisions (PubMed:31839538).</text>
</comment>
<comment type="tissue specificity">
    <text evidence="3 4">Mainly expressed in germ cells and early embryonic, proliferating cells.</text>
</comment>
<comment type="disruption phenotype">
    <text evidence="3 4 5 6">Mutant worms become hypersensitive to formaldehyde-induced DNA damage (PubMed:30914427). Mutant worms exhibit significant reduction in brood size at 25 degrees Celsius and also exhibit a high incidence of male progeny at both 20 and 25 degrees Celsius (PubMed:27718356, PubMed:31839537). Moreover, exhibit a mortal germline (MRT) phenotype characterized by transgenerational loss of fecundity and vitality, marked by reduced lifespan, decreased mobility, and loss of fertility in later generations (PubMed:31839537). Mutants have a mortal germline, where brood sizes become progressively smaller and the population fails to survive beyond 12 generations (PubMed:31839538).</text>
</comment>
<comment type="similarity">
    <text evidence="9">Belongs to the serine-aspartate repeat-containing protein (SDr) family.</text>
</comment>
<organism>
    <name type="scientific">Caenorhabditis elegans</name>
    <dbReference type="NCBI Taxonomy" id="6239"/>
    <lineage>
        <taxon>Eukaryota</taxon>
        <taxon>Metazoa</taxon>
        <taxon>Ecdysozoa</taxon>
        <taxon>Nematoda</taxon>
        <taxon>Chromadorea</taxon>
        <taxon>Rhabditida</taxon>
        <taxon>Rhabditina</taxon>
        <taxon>Rhabditomorpha</taxon>
        <taxon>Rhabditoidea</taxon>
        <taxon>Rhabditidae</taxon>
        <taxon>Peloderinae</taxon>
        <taxon>Caenorhabditis</taxon>
    </lineage>
</organism>
<sequence>MPTPFRDLHNKSNASASSYETAWSSSFSSRRSTNNDSKSNLKEIKDEPISNLDESISILENNISMMSVSSPTPAYRTPARVIAREAPMTPGDRLLQKIEKEDERDMLRQLYPEMFDSNQKPRQKPKEVKKALKVESLSDYENDDKENVPPCGKPSKEKEEKKQRTKKIVISSDSEDDGNFENYLKTLREKPTEPAKPERKIPVKKDFVVDDDYISEESSEEESEEEEEDVDDEEYRESSPEVEAKISYSDRKQKKRPTDEEEWFLLSLSEKFSGPIHEDAKVYIKETSLRYKKHRESLLTRLQDILVRRIFSAIPSEKLKVIWNARLRKSAGQCRNHSNGNSTVEMSPVVCTTAERVRDTLIHELCHAATWVVDRLHKEGHGPGWKRWGARCSSVFKSLPFIERCHSYEIEAKFFYVCEKDGCDVEIKRQSKSLDTSRKACGRCFGRFILYRYCRRTNTRIRIEDPKAKPVGPILSNSSKPSPPAPRRIVSEHPEGFKEYSEEHYWKYTAQGLKHSDVMGKLLKEFKELKQL</sequence>
<reference key="1">
    <citation type="journal article" date="1998" name="Science">
        <title>Genome sequence of the nematode C. elegans: a platform for investigating biology.</title>
        <authorList>
            <consortium name="The C. elegans sequencing consortium"/>
        </authorList>
    </citation>
    <scope>NUCLEOTIDE SEQUENCE [LARGE SCALE GENOMIC DNA]</scope>
    <source>
        <strain>Bristol N2</strain>
    </source>
</reference>
<reference key="2">
    <citation type="journal article" date="2016" name="Elife">
        <title>A widely employed germ cell marker is an ancient disordered protein with reproductive functions in diverse eukaryotes.</title>
        <authorList>
            <person name="Carmell M.A."/>
            <person name="Dokshin G.A."/>
            <person name="Skaletsky H."/>
            <person name="Hu Y.C."/>
            <person name="van Wolfswinkel J.C."/>
            <person name="Igarashi K.J."/>
            <person name="Bellott D.W."/>
            <person name="Nefedov M."/>
            <person name="Reddien P.W."/>
            <person name="Enders G.C."/>
            <person name="Uversky V.N."/>
            <person name="Mello C.C."/>
            <person name="Page D.C."/>
        </authorList>
    </citation>
    <scope>TISSUE SPECIFICITY</scope>
    <scope>DISRUPTION PHENOTYPE</scope>
</reference>
<reference key="3">
    <citation type="journal article" date="2019" name="EMBO J.">
        <title>SUMOylation promotes protective responses to DNA-protein cross-links.</title>
        <authorList>
            <person name="Borgermann N."/>
            <person name="Ackermann L."/>
            <person name="Schwertman P."/>
            <person name="Hendriks I.A."/>
            <person name="Thijssen K."/>
            <person name="Liu J.C."/>
            <person name="Lans H."/>
            <person name="Nielsen M.L."/>
            <person name="Mailand N."/>
        </authorList>
    </citation>
    <scope>TISSUE SPECIFICITY</scope>
    <scope>FUNCTION</scope>
    <scope>DISRUPTION PHENOTYPE</scope>
</reference>
<reference key="4">
    <citation type="journal article" date="2020" name="Dev. Cell">
        <title>GCNA Preserves Genome Integrity and Fertility Across Species.</title>
        <authorList>
            <person name="Bhargava V."/>
            <person name="Goldstein C.D."/>
            <person name="Russell L."/>
            <person name="Xu L."/>
            <person name="Ahmed M."/>
            <person name="Li W."/>
            <person name="Casey A."/>
            <person name="Servage K."/>
            <person name="Kollipara R."/>
            <person name="Picciarelli Z."/>
            <person name="Kittler R."/>
            <person name="Yatsenko A."/>
            <person name="Carmell M."/>
            <person name="Orth K."/>
            <person name="Amatruda J.F."/>
            <person name="Yanowitz J.L."/>
            <person name="Buszczak M."/>
        </authorList>
    </citation>
    <scope>DISRUPTION PHENOTYPE</scope>
    <scope>FUNCTION</scope>
</reference>
<reference key="5">
    <citation type="journal article" date="2020" name="Dev. Cell">
        <title>GCNA Interacts with Spartan and Topoisomerase II to Regulate Genome Stability.</title>
        <authorList>
            <person name="Dokshin G.A."/>
            <person name="Davis G.M."/>
            <person name="Sawle A.D."/>
            <person name="Eldridge M.D."/>
            <person name="Nicholls P.K."/>
            <person name="Gourley T.E."/>
            <person name="Romer K.A."/>
            <person name="Molesworth L.W."/>
            <person name="Tatnell H.R."/>
            <person name="Ozturk A.R."/>
            <person name="de Rooij D.G."/>
            <person name="Hannon G.J."/>
            <person name="Page D.C."/>
            <person name="Mello C.C."/>
            <person name="Carmell M.A."/>
        </authorList>
    </citation>
    <scope>DISRUPTION PHENOTYPE</scope>
    <scope>FUNCTION</scope>
    <scope>SUBCELLULAR LOCATION</scope>
    <scope>INTERACTION WITH TOP-2</scope>
</reference>
<protein>
    <recommendedName>
        <fullName evidence="9">Germ cell nuclear acidic-1 protein</fullName>
    </recommendedName>
    <alternativeName>
        <fullName evidence="8">Germ cell nuclear acidic-1 peptidase</fullName>
    </alternativeName>
</protein>